<organism>
    <name type="scientific">Streptomyces coelicolor (strain ATCC BAA-471 / A3(2) / M145)</name>
    <dbReference type="NCBI Taxonomy" id="100226"/>
    <lineage>
        <taxon>Bacteria</taxon>
        <taxon>Bacillati</taxon>
        <taxon>Actinomycetota</taxon>
        <taxon>Actinomycetes</taxon>
        <taxon>Kitasatosporales</taxon>
        <taxon>Streptomycetaceae</taxon>
        <taxon>Streptomyces</taxon>
        <taxon>Streptomyces albidoflavus group</taxon>
    </lineage>
</organism>
<evidence type="ECO:0000250" key="1">
    <source>
        <dbReference type="UniProtKB" id="P11064"/>
    </source>
</evidence>
<evidence type="ECO:0000305" key="2"/>
<proteinExistence type="inferred from homology"/>
<reference key="1">
    <citation type="journal article" date="1996" name="J. Bacteriol.">
        <title>Cloning, purification, and properties of a phosphotyrosine protein phosphatase from Streptomyces coelicolor A3(2).</title>
        <authorList>
            <person name="Li Y."/>
            <person name="Strohl W.R."/>
        </authorList>
    </citation>
    <scope>NUCLEOTIDE SEQUENCE [GENOMIC DNA]</scope>
    <source>
        <strain>A3(2) / 1147</strain>
    </source>
</reference>
<reference key="2">
    <citation type="journal article" date="2002" name="Nature">
        <title>Complete genome sequence of the model actinomycete Streptomyces coelicolor A3(2).</title>
        <authorList>
            <person name="Bentley S.D."/>
            <person name="Chater K.F."/>
            <person name="Cerdeno-Tarraga A.-M."/>
            <person name="Challis G.L."/>
            <person name="Thomson N.R."/>
            <person name="James K.D."/>
            <person name="Harris D.E."/>
            <person name="Quail M.A."/>
            <person name="Kieser H."/>
            <person name="Harper D."/>
            <person name="Bateman A."/>
            <person name="Brown S."/>
            <person name="Chandra G."/>
            <person name="Chen C.W."/>
            <person name="Collins M."/>
            <person name="Cronin A."/>
            <person name="Fraser A."/>
            <person name="Goble A."/>
            <person name="Hidalgo J."/>
            <person name="Hornsby T."/>
            <person name="Howarth S."/>
            <person name="Huang C.-H."/>
            <person name="Kieser T."/>
            <person name="Larke L."/>
            <person name="Murphy L.D."/>
            <person name="Oliver K."/>
            <person name="O'Neil S."/>
            <person name="Rabbinowitsch E."/>
            <person name="Rajandream M.A."/>
            <person name="Rutherford K.M."/>
            <person name="Rutter S."/>
            <person name="Seeger K."/>
            <person name="Saunders D."/>
            <person name="Sharp S."/>
            <person name="Squares R."/>
            <person name="Squares S."/>
            <person name="Taylor K."/>
            <person name="Warren T."/>
            <person name="Wietzorrek A."/>
            <person name="Woodward J.R."/>
            <person name="Barrell B.G."/>
            <person name="Parkhill J."/>
            <person name="Hopwood D.A."/>
        </authorList>
    </citation>
    <scope>NUCLEOTIDE SEQUENCE [LARGE SCALE GENOMIC DNA]</scope>
    <source>
        <strain>ATCC BAA-471 / A3(2) / M145</strain>
    </source>
</reference>
<name>PTPA_STRCO</name>
<sequence length="164" mass="17690">MTYRVCFVCTGNICRSPMAEAVFRARVEDAGLGHLVEADSAGTGGWHEGEGADPRTEAVLADHGYGLDHAARQFQQSWFSRLDLVVALDAGHLRALRRLAPTERDAAKVRLLRSYDPAVAGGDLDVPDPYYGGRDGFEECLEMVEAASTGLLAAVREQVEGRAA</sequence>
<comment type="function">
    <text>Acts on tyrosine phosphorylated proteins, low-MW aryl phosphates and natural and synthetic acyl phosphates. May be involved in the regulation of sulfur amino acid metabolism.</text>
</comment>
<comment type="catalytic activity">
    <reaction>
        <text>O-phospho-L-tyrosyl-[protein] + H2O = L-tyrosyl-[protein] + phosphate</text>
        <dbReference type="Rhea" id="RHEA:10684"/>
        <dbReference type="Rhea" id="RHEA-COMP:10136"/>
        <dbReference type="Rhea" id="RHEA-COMP:20101"/>
        <dbReference type="ChEBI" id="CHEBI:15377"/>
        <dbReference type="ChEBI" id="CHEBI:43474"/>
        <dbReference type="ChEBI" id="CHEBI:46858"/>
        <dbReference type="ChEBI" id="CHEBI:61978"/>
        <dbReference type="EC" id="3.1.3.48"/>
    </reaction>
</comment>
<comment type="similarity">
    <text evidence="2">Belongs to the low molecular weight phosphotyrosine protein phosphatase family.</text>
</comment>
<gene>
    <name type="primary">ptpA</name>
    <name type="ordered locus">SCO3921</name>
    <name type="ORF">SCQ11.04c</name>
</gene>
<dbReference type="EC" id="3.1.3.48"/>
<dbReference type="EMBL" id="U37580">
    <property type="protein sequence ID" value="AAC43614.1"/>
    <property type="molecule type" value="Genomic_DNA"/>
</dbReference>
<dbReference type="EMBL" id="AL939118">
    <property type="protein sequence ID" value="CAB46959.1"/>
    <property type="molecule type" value="Genomic_DNA"/>
</dbReference>
<dbReference type="PIR" id="T37174">
    <property type="entry name" value="T37174"/>
</dbReference>
<dbReference type="RefSeq" id="NP_628106.1">
    <property type="nucleotide sequence ID" value="NC_003888.3"/>
</dbReference>
<dbReference type="RefSeq" id="WP_003975011.1">
    <property type="nucleotide sequence ID" value="NZ_VNID01000003.1"/>
</dbReference>
<dbReference type="SMR" id="P53433"/>
<dbReference type="FunCoup" id="P53433">
    <property type="interactions" value="368"/>
</dbReference>
<dbReference type="STRING" id="100226.gene:17761548"/>
<dbReference type="PaxDb" id="100226-SCO3921"/>
<dbReference type="KEGG" id="sco:SCO3921"/>
<dbReference type="PATRIC" id="fig|100226.15.peg.3995"/>
<dbReference type="eggNOG" id="COG0394">
    <property type="taxonomic scope" value="Bacteria"/>
</dbReference>
<dbReference type="HOGENOM" id="CLU_071415_2_1_11"/>
<dbReference type="InParanoid" id="P53433"/>
<dbReference type="OrthoDB" id="9784339at2"/>
<dbReference type="PhylomeDB" id="P53433"/>
<dbReference type="Proteomes" id="UP000001973">
    <property type="component" value="Chromosome"/>
</dbReference>
<dbReference type="GO" id="GO:0004725">
    <property type="term" value="F:protein tyrosine phosphatase activity"/>
    <property type="evidence" value="ECO:0000318"/>
    <property type="project" value="GO_Central"/>
</dbReference>
<dbReference type="CDD" id="cd16343">
    <property type="entry name" value="LMWPTP"/>
    <property type="match status" value="1"/>
</dbReference>
<dbReference type="FunFam" id="3.40.50.2300:FF:000113">
    <property type="entry name" value="Low molecular weight protein-tyrosine-phosphatase"/>
    <property type="match status" value="1"/>
</dbReference>
<dbReference type="Gene3D" id="3.40.50.2300">
    <property type="match status" value="1"/>
</dbReference>
<dbReference type="InterPro" id="IPR050438">
    <property type="entry name" value="LMW_PTPase"/>
</dbReference>
<dbReference type="InterPro" id="IPR023485">
    <property type="entry name" value="Ptyr_pPase"/>
</dbReference>
<dbReference type="InterPro" id="IPR036196">
    <property type="entry name" value="Ptyr_pPase_sf"/>
</dbReference>
<dbReference type="InterPro" id="IPR017867">
    <property type="entry name" value="Tyr_phospatase_low_mol_wt"/>
</dbReference>
<dbReference type="PANTHER" id="PTHR11717:SF7">
    <property type="entry name" value="LOW MOLECULAR WEIGHT PHOSPHOTYROSINE PROTEIN PHOSPHATASE"/>
    <property type="match status" value="1"/>
</dbReference>
<dbReference type="PANTHER" id="PTHR11717">
    <property type="entry name" value="LOW MOLECULAR WEIGHT PROTEIN TYROSINE PHOSPHATASE"/>
    <property type="match status" value="1"/>
</dbReference>
<dbReference type="Pfam" id="PF01451">
    <property type="entry name" value="LMWPc"/>
    <property type="match status" value="1"/>
</dbReference>
<dbReference type="PRINTS" id="PR00719">
    <property type="entry name" value="LMWPTPASE"/>
</dbReference>
<dbReference type="SMART" id="SM00226">
    <property type="entry name" value="LMWPc"/>
    <property type="match status" value="1"/>
</dbReference>
<dbReference type="SUPFAM" id="SSF52788">
    <property type="entry name" value="Phosphotyrosine protein phosphatases I"/>
    <property type="match status" value="1"/>
</dbReference>
<feature type="chain" id="PRO_0000046569" description="Low molecular weight protein-tyrosine-phosphatase">
    <location>
        <begin position="1"/>
        <end position="164"/>
    </location>
</feature>
<feature type="active site" description="Nucleophile" evidence="1">
    <location>
        <position position="9"/>
    </location>
</feature>
<feature type="active site" evidence="1">
    <location>
        <position position="15"/>
    </location>
</feature>
<feature type="active site" description="Proton donor" evidence="1">
    <location>
        <position position="128"/>
    </location>
</feature>
<accession>P53433</accession>
<protein>
    <recommendedName>
        <fullName>Low molecular weight protein-tyrosine-phosphatase</fullName>
        <shortName>PTPase</shortName>
        <ecNumber>3.1.3.48</ecNumber>
    </recommendedName>
    <alternativeName>
        <fullName>Small, acidic phosphotyrosine protein phosphatase</fullName>
        <shortName>PY protein phosphatase</shortName>
    </alternativeName>
</protein>
<keyword id="KW-0378">Hydrolase</keyword>
<keyword id="KW-0904">Protein phosphatase</keyword>
<keyword id="KW-1185">Reference proteome</keyword>